<accession>Q04430</accession>
<accession>D6VTF2</accession>
<protein>
    <recommendedName>
        <fullName>Pantothenate kinase CAB1</fullName>
        <ecNumber evidence="4">2.7.1.33</ecNumber>
    </recommendedName>
    <alternativeName>
        <fullName>Coenzyme A biosynthesis protein 1</fullName>
    </alternativeName>
    <alternativeName>
        <fullName>Pantothenic acid kinase CAB1</fullName>
    </alternativeName>
</protein>
<feature type="chain" id="PRO_0000253828" description="Pantothenate kinase CAB1">
    <location>
        <begin position="1"/>
        <end position="367"/>
    </location>
</feature>
<feature type="mutagenesis site" description="Leads to thermo-sensitivity." evidence="4">
    <original>G</original>
    <variation>S</variation>
    <location>
        <position position="351"/>
    </location>
</feature>
<feature type="strand" evidence="7">
    <location>
        <begin position="7"/>
        <end position="9"/>
    </location>
</feature>
<feature type="strand" evidence="7">
    <location>
        <begin position="19"/>
        <end position="25"/>
    </location>
</feature>
<feature type="strand" evidence="7">
    <location>
        <begin position="30"/>
        <end position="34"/>
    </location>
</feature>
<feature type="strand" evidence="7">
    <location>
        <begin position="41"/>
        <end position="47"/>
    </location>
</feature>
<feature type="helix" evidence="7">
    <location>
        <begin position="52"/>
        <end position="66"/>
    </location>
</feature>
<feature type="helix" evidence="7">
    <location>
        <begin position="71"/>
        <end position="73"/>
    </location>
</feature>
<feature type="strand" evidence="7">
    <location>
        <begin position="74"/>
        <end position="80"/>
    </location>
</feature>
<feature type="turn" evidence="7">
    <location>
        <begin position="81"/>
        <end position="86"/>
    </location>
</feature>
<feature type="helix" evidence="7">
    <location>
        <begin position="87"/>
        <end position="93"/>
    </location>
</feature>
<feature type="strand" evidence="7">
    <location>
        <begin position="98"/>
        <end position="102"/>
    </location>
</feature>
<feature type="helix" evidence="7">
    <location>
        <begin position="105"/>
        <end position="119"/>
    </location>
</feature>
<feature type="strand" evidence="7">
    <location>
        <begin position="124"/>
        <end position="128"/>
    </location>
</feature>
<feature type="turn" evidence="7">
    <location>
        <begin position="129"/>
        <end position="131"/>
    </location>
</feature>
<feature type="strand" evidence="7">
    <location>
        <begin position="132"/>
        <end position="136"/>
    </location>
</feature>
<feature type="turn" evidence="9">
    <location>
        <begin position="138"/>
        <end position="140"/>
    </location>
</feature>
<feature type="strand" evidence="9">
    <location>
        <begin position="145"/>
        <end position="148"/>
    </location>
</feature>
<feature type="strand" evidence="7">
    <location>
        <begin position="150"/>
        <end position="167"/>
    </location>
</feature>
<feature type="strand" evidence="7">
    <location>
        <begin position="170"/>
        <end position="178"/>
    </location>
</feature>
<feature type="helix" evidence="7">
    <location>
        <begin position="181"/>
        <end position="192"/>
    </location>
</feature>
<feature type="helix" evidence="7">
    <location>
        <begin position="197"/>
        <end position="206"/>
    </location>
</feature>
<feature type="helix" evidence="7">
    <location>
        <begin position="209"/>
        <end position="211"/>
    </location>
</feature>
<feature type="strand" evidence="7">
    <location>
        <begin position="213"/>
        <end position="215"/>
    </location>
</feature>
<feature type="helix" evidence="7">
    <location>
        <begin position="216"/>
        <end position="220"/>
    </location>
</feature>
<feature type="helix" evidence="8">
    <location>
        <begin position="225"/>
        <end position="227"/>
    </location>
</feature>
<feature type="strand" evidence="7">
    <location>
        <begin position="234"/>
        <end position="236"/>
    </location>
</feature>
<feature type="turn" evidence="7">
    <location>
        <begin position="237"/>
        <end position="240"/>
    </location>
</feature>
<feature type="strand" evidence="8">
    <location>
        <begin position="260"/>
        <end position="262"/>
    </location>
</feature>
<feature type="turn" evidence="7">
    <location>
        <begin position="266"/>
        <end position="271"/>
    </location>
</feature>
<feature type="strand" evidence="7">
    <location>
        <begin position="273"/>
        <end position="275"/>
    </location>
</feature>
<feature type="helix" evidence="7">
    <location>
        <begin position="276"/>
        <end position="301"/>
    </location>
</feature>
<feature type="strand" evidence="7">
    <location>
        <begin position="306"/>
        <end position="314"/>
    </location>
</feature>
<feature type="helix" evidence="7">
    <location>
        <begin position="318"/>
        <end position="332"/>
    </location>
</feature>
<feature type="strand" evidence="7">
    <location>
        <begin position="335"/>
        <end position="341"/>
    </location>
</feature>
<feature type="helix" evidence="7">
    <location>
        <begin position="344"/>
        <end position="346"/>
    </location>
</feature>
<feature type="helix" evidence="7">
    <location>
        <begin position="347"/>
        <end position="356"/>
    </location>
</feature>
<evidence type="ECO:0000250" key="1"/>
<evidence type="ECO:0000269" key="2">
    <source>
    </source>
</evidence>
<evidence type="ECO:0000269" key="3">
    <source>
    </source>
</evidence>
<evidence type="ECO:0000269" key="4">
    <source>
    </source>
</evidence>
<evidence type="ECO:0000305" key="5"/>
<evidence type="ECO:0000305" key="6">
    <source>
    </source>
</evidence>
<evidence type="ECO:0007829" key="7">
    <source>
        <dbReference type="PDB" id="6UJ5"/>
    </source>
</evidence>
<evidence type="ECO:0007829" key="8">
    <source>
        <dbReference type="PDB" id="7T1G"/>
    </source>
</evidence>
<evidence type="ECO:0007829" key="9">
    <source>
        <dbReference type="PDB" id="7T1H"/>
    </source>
</evidence>
<dbReference type="EC" id="2.7.1.33" evidence="4"/>
<dbReference type="EMBL" id="U33057">
    <property type="protein sequence ID" value="AAB64970.1"/>
    <property type="molecule type" value="Genomic_DNA"/>
</dbReference>
<dbReference type="EMBL" id="BK006938">
    <property type="protein sequence ID" value="DAA12362.1"/>
    <property type="molecule type" value="Genomic_DNA"/>
</dbReference>
<dbReference type="PIR" id="S69586">
    <property type="entry name" value="S69586"/>
</dbReference>
<dbReference type="RefSeq" id="NP_010820.3">
    <property type="nucleotide sequence ID" value="NM_001180839.3"/>
</dbReference>
<dbReference type="PDB" id="6UJ5">
    <property type="method" value="X-ray"/>
    <property type="resolution" value="1.80 A"/>
    <property type="chains" value="A/B=1-367"/>
</dbReference>
<dbReference type="PDB" id="7T1G">
    <property type="method" value="X-ray"/>
    <property type="resolution" value="2.00 A"/>
    <property type="chains" value="A/B=1-367"/>
</dbReference>
<dbReference type="PDB" id="7T1H">
    <property type="method" value="X-ray"/>
    <property type="resolution" value="1.90 A"/>
    <property type="chains" value="A/B=1-367"/>
</dbReference>
<dbReference type="PDB" id="7T1I">
    <property type="method" value="X-ray"/>
    <property type="resolution" value="2.40 A"/>
    <property type="chains" value="A/B=1-367"/>
</dbReference>
<dbReference type="PDBsum" id="6UJ5"/>
<dbReference type="PDBsum" id="7T1G"/>
<dbReference type="PDBsum" id="7T1H"/>
<dbReference type="PDBsum" id="7T1I"/>
<dbReference type="SMR" id="Q04430"/>
<dbReference type="BioGRID" id="32580">
    <property type="interactions" value="266"/>
</dbReference>
<dbReference type="DIP" id="DIP-5375N"/>
<dbReference type="FunCoup" id="Q04430">
    <property type="interactions" value="890"/>
</dbReference>
<dbReference type="IntAct" id="Q04430">
    <property type="interactions" value="10"/>
</dbReference>
<dbReference type="STRING" id="4932.YDR531W"/>
<dbReference type="iPTMnet" id="Q04430"/>
<dbReference type="PaxDb" id="4932-YDR531W"/>
<dbReference type="PeptideAtlas" id="Q04430"/>
<dbReference type="EnsemblFungi" id="YDR531W_mRNA">
    <property type="protein sequence ID" value="YDR531W"/>
    <property type="gene ID" value="YDR531W"/>
</dbReference>
<dbReference type="GeneID" id="852144"/>
<dbReference type="KEGG" id="sce:YDR531W"/>
<dbReference type="AGR" id="SGD:S000002939"/>
<dbReference type="SGD" id="S000002939">
    <property type="gene designation" value="CAB1"/>
</dbReference>
<dbReference type="VEuPathDB" id="FungiDB:YDR531W"/>
<dbReference type="eggNOG" id="KOG2201">
    <property type="taxonomic scope" value="Eukaryota"/>
</dbReference>
<dbReference type="GeneTree" id="ENSGT00940000158896"/>
<dbReference type="HOGENOM" id="CLU_011154_3_0_1"/>
<dbReference type="InParanoid" id="Q04430"/>
<dbReference type="OMA" id="FKNPDIC"/>
<dbReference type="OrthoDB" id="498611at2759"/>
<dbReference type="BioCyc" id="MetaCyc:MONOMER3O-268"/>
<dbReference type="BioCyc" id="YEAST:MONOMER3O-268"/>
<dbReference type="BRENDA" id="2.7.1.33">
    <property type="organism ID" value="984"/>
</dbReference>
<dbReference type="Reactome" id="R-SCE-199220">
    <property type="pathway name" value="Vitamin B5 (pantothenate) metabolism"/>
</dbReference>
<dbReference type="UniPathway" id="UPA00241">
    <property type="reaction ID" value="UER00352"/>
</dbReference>
<dbReference type="BioGRID-ORCS" id="852144">
    <property type="hits" value="0 hits in 10 CRISPR screens"/>
</dbReference>
<dbReference type="PRO" id="PR:Q04430"/>
<dbReference type="Proteomes" id="UP000002311">
    <property type="component" value="Chromosome IV"/>
</dbReference>
<dbReference type="RNAct" id="Q04430">
    <property type="molecule type" value="protein"/>
</dbReference>
<dbReference type="GO" id="GO:0005737">
    <property type="term" value="C:cytoplasm"/>
    <property type="evidence" value="ECO:0000314"/>
    <property type="project" value="SGD"/>
</dbReference>
<dbReference type="GO" id="GO:0005829">
    <property type="term" value="C:cytosol"/>
    <property type="evidence" value="ECO:0000318"/>
    <property type="project" value="GO_Central"/>
</dbReference>
<dbReference type="GO" id="GO:0005634">
    <property type="term" value="C:nucleus"/>
    <property type="evidence" value="ECO:0007005"/>
    <property type="project" value="SGD"/>
</dbReference>
<dbReference type="GO" id="GO:0005524">
    <property type="term" value="F:ATP binding"/>
    <property type="evidence" value="ECO:0007669"/>
    <property type="project" value="UniProtKB-KW"/>
</dbReference>
<dbReference type="GO" id="GO:0004594">
    <property type="term" value="F:pantothenate kinase activity"/>
    <property type="evidence" value="ECO:0000315"/>
    <property type="project" value="SGD"/>
</dbReference>
<dbReference type="GO" id="GO:0015937">
    <property type="term" value="P:coenzyme A biosynthetic process"/>
    <property type="evidence" value="ECO:0000316"/>
    <property type="project" value="SGD"/>
</dbReference>
<dbReference type="GO" id="GO:0008204">
    <property type="term" value="P:ergosterol metabolic process"/>
    <property type="evidence" value="ECO:0000315"/>
    <property type="project" value="SGD"/>
</dbReference>
<dbReference type="CDD" id="cd24123">
    <property type="entry name" value="ASKHA_NBD_PanK-II_Pank4"/>
    <property type="match status" value="1"/>
</dbReference>
<dbReference type="FunFam" id="3.30.420.510:FF:000011">
    <property type="entry name" value="Conserved protein"/>
    <property type="match status" value="1"/>
</dbReference>
<dbReference type="FunFam" id="3.30.420.40:FF:000115">
    <property type="entry name" value="Pantothenate kinase PanK"/>
    <property type="match status" value="1"/>
</dbReference>
<dbReference type="Gene3D" id="3.30.420.40">
    <property type="match status" value="1"/>
</dbReference>
<dbReference type="Gene3D" id="3.30.420.510">
    <property type="match status" value="1"/>
</dbReference>
<dbReference type="InterPro" id="IPR043129">
    <property type="entry name" value="ATPase_NBD"/>
</dbReference>
<dbReference type="InterPro" id="IPR004567">
    <property type="entry name" value="Type_II_PanK"/>
</dbReference>
<dbReference type="NCBIfam" id="TIGR00555">
    <property type="entry name" value="panK_eukar"/>
    <property type="match status" value="1"/>
</dbReference>
<dbReference type="PANTHER" id="PTHR12280:SF20">
    <property type="entry name" value="4'-PHOSPHOPANTETHEINE PHOSPHATASE"/>
    <property type="match status" value="1"/>
</dbReference>
<dbReference type="PANTHER" id="PTHR12280">
    <property type="entry name" value="PANTOTHENATE KINASE"/>
    <property type="match status" value="1"/>
</dbReference>
<dbReference type="Pfam" id="PF03630">
    <property type="entry name" value="Fumble"/>
    <property type="match status" value="1"/>
</dbReference>
<dbReference type="SUPFAM" id="SSF53067">
    <property type="entry name" value="Actin-like ATPase domain"/>
    <property type="match status" value="2"/>
</dbReference>
<comment type="function">
    <text evidence="4">Plays a role in the physiological regulation of the intracellular CoA concentration.</text>
</comment>
<comment type="catalytic activity">
    <reaction evidence="4">
        <text>(R)-pantothenate + ATP = (R)-4'-phosphopantothenate + ADP + H(+)</text>
        <dbReference type="Rhea" id="RHEA:16373"/>
        <dbReference type="ChEBI" id="CHEBI:10986"/>
        <dbReference type="ChEBI" id="CHEBI:15378"/>
        <dbReference type="ChEBI" id="CHEBI:29032"/>
        <dbReference type="ChEBI" id="CHEBI:30616"/>
        <dbReference type="ChEBI" id="CHEBI:456216"/>
        <dbReference type="EC" id="2.7.1.33"/>
    </reaction>
</comment>
<comment type="activity regulation">
    <text evidence="1">Regulated by feedback inhibition by malonyl-CoA.</text>
</comment>
<comment type="pathway">
    <text evidence="6">Cofactor biosynthesis; coenzyme A biosynthesis; CoA from (R)-pantothenate: step 1/5.</text>
</comment>
<comment type="subcellular location">
    <subcellularLocation>
        <location evidence="2">Cytoplasm</location>
    </subcellularLocation>
    <subcellularLocation>
        <location evidence="2">Nucleus</location>
    </subcellularLocation>
</comment>
<comment type="miscellaneous">
    <text evidence="3">Present with 6190 molecules/cell in log phase SD medium.</text>
</comment>
<comment type="similarity">
    <text evidence="5">Belongs to the type II pantothenate kinase family.</text>
</comment>
<proteinExistence type="evidence at protein level"/>
<name>PANK_YEAST</name>
<keyword id="KW-0002">3D-structure</keyword>
<keyword id="KW-0067">ATP-binding</keyword>
<keyword id="KW-0173">Coenzyme A biosynthesis</keyword>
<keyword id="KW-0963">Cytoplasm</keyword>
<keyword id="KW-0418">Kinase</keyword>
<keyword id="KW-0547">Nucleotide-binding</keyword>
<keyword id="KW-0539">Nucleus</keyword>
<keyword id="KW-1185">Reference proteome</keyword>
<keyword id="KW-0808">Transferase</keyword>
<reference key="1">
    <citation type="journal article" date="1997" name="Nature">
        <title>The nucleotide sequence of Saccharomyces cerevisiae chromosome IV.</title>
        <authorList>
            <person name="Jacq C."/>
            <person name="Alt-Moerbe J."/>
            <person name="Andre B."/>
            <person name="Arnold W."/>
            <person name="Bahr A."/>
            <person name="Ballesta J.P.G."/>
            <person name="Bargues M."/>
            <person name="Baron L."/>
            <person name="Becker A."/>
            <person name="Biteau N."/>
            <person name="Bloecker H."/>
            <person name="Blugeon C."/>
            <person name="Boskovic J."/>
            <person name="Brandt P."/>
            <person name="Brueckner M."/>
            <person name="Buitrago M.J."/>
            <person name="Coster F."/>
            <person name="Delaveau T."/>
            <person name="del Rey F."/>
            <person name="Dujon B."/>
            <person name="Eide L.G."/>
            <person name="Garcia-Cantalejo J.M."/>
            <person name="Goffeau A."/>
            <person name="Gomez-Peris A."/>
            <person name="Granotier C."/>
            <person name="Hanemann V."/>
            <person name="Hankeln T."/>
            <person name="Hoheisel J.D."/>
            <person name="Jaeger W."/>
            <person name="Jimenez A."/>
            <person name="Jonniaux J.-L."/>
            <person name="Kraemer C."/>
            <person name="Kuester H."/>
            <person name="Laamanen P."/>
            <person name="Legros Y."/>
            <person name="Louis E.J."/>
            <person name="Moeller-Rieker S."/>
            <person name="Monnet A."/>
            <person name="Moro M."/>
            <person name="Mueller-Auer S."/>
            <person name="Nussbaumer B."/>
            <person name="Paricio N."/>
            <person name="Paulin L."/>
            <person name="Perea J."/>
            <person name="Perez-Alonso M."/>
            <person name="Perez-Ortin J.E."/>
            <person name="Pohl T.M."/>
            <person name="Prydz H."/>
            <person name="Purnelle B."/>
            <person name="Rasmussen S.W."/>
            <person name="Remacha M.A."/>
            <person name="Revuelta J.L."/>
            <person name="Rieger M."/>
            <person name="Salom D."/>
            <person name="Saluz H.P."/>
            <person name="Saiz J.E."/>
            <person name="Saren A.-M."/>
            <person name="Schaefer M."/>
            <person name="Scharfe M."/>
            <person name="Schmidt E.R."/>
            <person name="Schneider C."/>
            <person name="Scholler P."/>
            <person name="Schwarz S."/>
            <person name="Soler-Mira A."/>
            <person name="Urrestarazu L.A."/>
            <person name="Verhasselt P."/>
            <person name="Vissers S."/>
            <person name="Voet M."/>
            <person name="Volckaert G."/>
            <person name="Wagner G."/>
            <person name="Wambutt R."/>
            <person name="Wedler E."/>
            <person name="Wedler H."/>
            <person name="Woelfl S."/>
            <person name="Harris D.E."/>
            <person name="Bowman S."/>
            <person name="Brown D."/>
            <person name="Churcher C.M."/>
            <person name="Connor R."/>
            <person name="Dedman K."/>
            <person name="Gentles S."/>
            <person name="Hamlin N."/>
            <person name="Hunt S."/>
            <person name="Jones L."/>
            <person name="McDonald S."/>
            <person name="Murphy L.D."/>
            <person name="Niblett D."/>
            <person name="Odell C."/>
            <person name="Oliver K."/>
            <person name="Rajandream M.A."/>
            <person name="Richards C."/>
            <person name="Shore L."/>
            <person name="Walsh S.V."/>
            <person name="Barrell B.G."/>
            <person name="Dietrich F.S."/>
            <person name="Mulligan J.T."/>
            <person name="Allen E."/>
            <person name="Araujo R."/>
            <person name="Aviles E."/>
            <person name="Berno A."/>
            <person name="Carpenter J."/>
            <person name="Chen E."/>
            <person name="Cherry J.M."/>
            <person name="Chung E."/>
            <person name="Duncan M."/>
            <person name="Hunicke-Smith S."/>
            <person name="Hyman R.W."/>
            <person name="Komp C."/>
            <person name="Lashkari D."/>
            <person name="Lew H."/>
            <person name="Lin D."/>
            <person name="Mosedale D."/>
            <person name="Nakahara K."/>
            <person name="Namath A."/>
            <person name="Oefner P."/>
            <person name="Oh C."/>
            <person name="Petel F.X."/>
            <person name="Roberts D."/>
            <person name="Schramm S."/>
            <person name="Schroeder M."/>
            <person name="Shogren T."/>
            <person name="Shroff N."/>
            <person name="Winant A."/>
            <person name="Yelton M.A."/>
            <person name="Botstein D."/>
            <person name="Davis R.W."/>
            <person name="Johnston M."/>
            <person name="Andrews S."/>
            <person name="Brinkman R."/>
            <person name="Cooper J."/>
            <person name="Ding H."/>
            <person name="Du Z."/>
            <person name="Favello A."/>
            <person name="Fulton L."/>
            <person name="Gattung S."/>
            <person name="Greco T."/>
            <person name="Hallsworth K."/>
            <person name="Hawkins J."/>
            <person name="Hillier L.W."/>
            <person name="Jier M."/>
            <person name="Johnson D."/>
            <person name="Johnston L."/>
            <person name="Kirsten J."/>
            <person name="Kucaba T."/>
            <person name="Langston Y."/>
            <person name="Latreille P."/>
            <person name="Le T."/>
            <person name="Mardis E."/>
            <person name="Menezes S."/>
            <person name="Miller N."/>
            <person name="Nhan M."/>
            <person name="Pauley A."/>
            <person name="Peluso D."/>
            <person name="Rifkin L."/>
            <person name="Riles L."/>
            <person name="Taich A."/>
            <person name="Trevaskis E."/>
            <person name="Vignati D."/>
            <person name="Wilcox L."/>
            <person name="Wohldman P."/>
            <person name="Vaudin M."/>
            <person name="Wilson R."/>
            <person name="Waterston R."/>
            <person name="Albermann K."/>
            <person name="Hani J."/>
            <person name="Heumann K."/>
            <person name="Kleine K."/>
            <person name="Mewes H.-W."/>
            <person name="Zollner A."/>
            <person name="Zaccaria P."/>
        </authorList>
    </citation>
    <scope>NUCLEOTIDE SEQUENCE [LARGE SCALE GENOMIC DNA]</scope>
    <source>
        <strain>ATCC 204508 / S288c</strain>
    </source>
</reference>
<reference key="2">
    <citation type="journal article" date="2014" name="G3 (Bethesda)">
        <title>The reference genome sequence of Saccharomyces cerevisiae: Then and now.</title>
        <authorList>
            <person name="Engel S.R."/>
            <person name="Dietrich F.S."/>
            <person name="Fisk D.G."/>
            <person name="Binkley G."/>
            <person name="Balakrishnan R."/>
            <person name="Costanzo M.C."/>
            <person name="Dwight S.S."/>
            <person name="Hitz B.C."/>
            <person name="Karra K."/>
            <person name="Nash R.S."/>
            <person name="Weng S."/>
            <person name="Wong E.D."/>
            <person name="Lloyd P."/>
            <person name="Skrzypek M.S."/>
            <person name="Miyasato S.R."/>
            <person name="Simison M."/>
            <person name="Cherry J.M."/>
        </authorList>
    </citation>
    <scope>GENOME REANNOTATION</scope>
    <source>
        <strain>ATCC 204508 / S288c</strain>
    </source>
</reference>
<reference key="3">
    <citation type="journal article" date="2003" name="Nature">
        <title>Global analysis of protein localization in budding yeast.</title>
        <authorList>
            <person name="Huh W.-K."/>
            <person name="Falvo J.V."/>
            <person name="Gerke L.C."/>
            <person name="Carroll A.S."/>
            <person name="Howson R.W."/>
            <person name="Weissman J.S."/>
            <person name="O'Shea E.K."/>
        </authorList>
    </citation>
    <scope>SUBCELLULAR LOCATION [LARGE SCALE ANALYSIS]</scope>
</reference>
<reference key="4">
    <citation type="journal article" date="2003" name="Nature">
        <title>Global analysis of protein expression in yeast.</title>
        <authorList>
            <person name="Ghaemmaghami S."/>
            <person name="Huh W.-K."/>
            <person name="Bower K."/>
            <person name="Howson R.W."/>
            <person name="Belle A."/>
            <person name="Dephoure N."/>
            <person name="O'Shea E.K."/>
            <person name="Weissman J.S."/>
        </authorList>
    </citation>
    <scope>LEVEL OF PROTEIN EXPRESSION [LARGE SCALE ANALYSIS]</scope>
</reference>
<reference key="5">
    <citation type="journal article" date="2007" name="J. Proteome Res.">
        <title>Large-scale phosphorylation analysis of alpha-factor-arrested Saccharomyces cerevisiae.</title>
        <authorList>
            <person name="Li X."/>
            <person name="Gerber S.A."/>
            <person name="Rudner A.D."/>
            <person name="Beausoleil S.A."/>
            <person name="Haas W."/>
            <person name="Villen J."/>
            <person name="Elias J.E."/>
            <person name="Gygi S.P."/>
        </authorList>
    </citation>
    <scope>IDENTIFICATION BY MASS SPECTROMETRY [LARGE SCALE ANALYSIS]</scope>
    <source>
        <strain>ADR376</strain>
    </source>
</reference>
<reference key="6">
    <citation type="journal article" date="2009" name="Curr. Genet.">
        <title>Genetic analysis of coenzyme A biosynthesis in the yeast Saccharomyces cerevisiae: identification of a conditional mutation in the pantothenate kinase gene CAB1.</title>
        <authorList>
            <person name="Olzhausen J."/>
            <person name="Schuebbe S."/>
            <person name="Schueller H.-J."/>
        </authorList>
    </citation>
    <scope>FUNCTION</scope>
    <scope>MUTAGENESIS OF GLY-351</scope>
    <scope>CATALYTIC ACTIVITY</scope>
</reference>
<sequence>MPRITQEISYNCDYGDNTFNLAIDIGGTLAKVVFSPIHSNRLMFYTIETEKIDKFMELLHSIIKEHNNGCYRMTHIIATGGGAFKFYDLLYENFPQIKGISRFEEMEGLIHGLDFFIHEIPDEVFTYNDQDGERIIPTSSGTMDSKAIYPYLLVNIGSGVSILKVTEPNNFSRVGGSSLGGGTLWGLLSLITGAQTYDQMLDWAQEGDNSSVDMLVGDIYGTDYNKIGLKSSAIASSFGKVFQNRMTSNKSLENNENKLYSSHESIEKNNGQMFKNPDICKSLLFAISNNIGQIAYLQAKINNIQNIYFGGSYTRGHLTTMNTLSYAINFWSQGSKQAFFLKHEGYLGAMGAFLSASRHSSTKKTST</sequence>
<organism>
    <name type="scientific">Saccharomyces cerevisiae (strain ATCC 204508 / S288c)</name>
    <name type="common">Baker's yeast</name>
    <dbReference type="NCBI Taxonomy" id="559292"/>
    <lineage>
        <taxon>Eukaryota</taxon>
        <taxon>Fungi</taxon>
        <taxon>Dikarya</taxon>
        <taxon>Ascomycota</taxon>
        <taxon>Saccharomycotina</taxon>
        <taxon>Saccharomycetes</taxon>
        <taxon>Saccharomycetales</taxon>
        <taxon>Saccharomycetaceae</taxon>
        <taxon>Saccharomyces</taxon>
    </lineage>
</organism>
<gene>
    <name type="primary">CAB1</name>
    <name type="ordered locus">YDR531W</name>
</gene>